<evidence type="ECO:0000255" key="1">
    <source>
        <dbReference type="HAMAP-Rule" id="MF_00123"/>
    </source>
</evidence>
<comment type="catalytic activity">
    <reaction evidence="1">
        <text>tRNA(Arg) + L-arginine + ATP = L-arginyl-tRNA(Arg) + AMP + diphosphate</text>
        <dbReference type="Rhea" id="RHEA:20301"/>
        <dbReference type="Rhea" id="RHEA-COMP:9658"/>
        <dbReference type="Rhea" id="RHEA-COMP:9673"/>
        <dbReference type="ChEBI" id="CHEBI:30616"/>
        <dbReference type="ChEBI" id="CHEBI:32682"/>
        <dbReference type="ChEBI" id="CHEBI:33019"/>
        <dbReference type="ChEBI" id="CHEBI:78442"/>
        <dbReference type="ChEBI" id="CHEBI:78513"/>
        <dbReference type="ChEBI" id="CHEBI:456215"/>
        <dbReference type="EC" id="6.1.1.19"/>
    </reaction>
</comment>
<comment type="subunit">
    <text evidence="1">Monomer.</text>
</comment>
<comment type="subcellular location">
    <subcellularLocation>
        <location evidence="1">Cytoplasm</location>
    </subcellularLocation>
</comment>
<comment type="similarity">
    <text evidence="1">Belongs to the class-I aminoacyl-tRNA synthetase family.</text>
</comment>
<keyword id="KW-0030">Aminoacyl-tRNA synthetase</keyword>
<keyword id="KW-0067">ATP-binding</keyword>
<keyword id="KW-0963">Cytoplasm</keyword>
<keyword id="KW-0436">Ligase</keyword>
<keyword id="KW-0547">Nucleotide-binding</keyword>
<keyword id="KW-0648">Protein biosynthesis</keyword>
<organism>
    <name type="scientific">Ureaplasma parvum serovar 3 (strain ATCC 27815 / 27 / NCTC 11736)</name>
    <dbReference type="NCBI Taxonomy" id="505682"/>
    <lineage>
        <taxon>Bacteria</taxon>
        <taxon>Bacillati</taxon>
        <taxon>Mycoplasmatota</taxon>
        <taxon>Mycoplasmoidales</taxon>
        <taxon>Mycoplasmoidaceae</taxon>
        <taxon>Ureaplasma</taxon>
    </lineage>
</organism>
<proteinExistence type="inferred from homology"/>
<reference key="1">
    <citation type="submission" date="2008-02" db="EMBL/GenBank/DDBJ databases">
        <title>Genome sequence of Ureaplasma parvum serovar 3.</title>
        <authorList>
            <person name="Methe B.A."/>
            <person name="Glass J."/>
            <person name="Waites K."/>
            <person name="Shrivastava S."/>
        </authorList>
    </citation>
    <scope>NUCLEOTIDE SEQUENCE [LARGE SCALE GENOMIC DNA]</scope>
    <source>
        <strain>ATCC 27815 / 27 / NCTC 11736</strain>
    </source>
</reference>
<gene>
    <name evidence="1" type="primary">argS</name>
    <name type="ordered locus">UPA3_0288</name>
</gene>
<sequence>MITQKISEELNKALAKMGIHDTQETKILVDKTKNIKFGDFYTNIAMILSKKNNKSSLEIAKEIANNFEQDLFLEVNLQPPGFLNFKLKAKDHENLLKQIYYEKDRFGQFSKKNITYNIEYVSANPTGYLHIAHAANAIYGDILANLLKIYGYDVETEYWINDAGNQIDKLAMSVLVRYLQLQNINIQLPADAYHGQEIHLVAQTLYQTYKNQFINVRLNEKYEIDDDIANQEIKNFAVKYLLNEIKNDLASINTFIDTYTSENWIRNSGRILEVLSKIKPYTYTLDGALWLKTTTFGDDKDRVLIKSDGSYTYFTPDIAYHDYKFNKTNTTKLIDVWGTDHLGYIARLKAAMNALGYDPNNLEIVCAQVMKLVKNNQEFKLSKRSGQSLTIKDLVEIIGKDALRWFLGSSSMNSHVIIDVDIALSKNNNNPLYYVQYAHARANQVLNKQVYELDFKTDLLTETRERELLNQLHFYKQTIANAANNREPHRISNYLYDLAQIFHNYYANVKINNDNNKVLSAQRYTLVWCVKQVLANGLAIMKITPYDQMY</sequence>
<feature type="chain" id="PRO_1000076236" description="Arginine--tRNA ligase">
    <location>
        <begin position="1"/>
        <end position="550"/>
    </location>
</feature>
<feature type="short sequence motif" description="'HIGH' region">
    <location>
        <begin position="123"/>
        <end position="133"/>
    </location>
</feature>
<dbReference type="EC" id="6.1.1.19" evidence="1"/>
<dbReference type="EMBL" id="CP000942">
    <property type="protein sequence ID" value="ACA32803.1"/>
    <property type="molecule type" value="Genomic_DNA"/>
</dbReference>
<dbReference type="RefSeq" id="WP_006688892.1">
    <property type="nucleotide sequence ID" value="NC_010503.1"/>
</dbReference>
<dbReference type="SMR" id="B1AIR8"/>
<dbReference type="GeneID" id="29672519"/>
<dbReference type="KEGG" id="upa:UPA3_0288"/>
<dbReference type="HOGENOM" id="CLU_006406_0_1_14"/>
<dbReference type="Proteomes" id="UP000002162">
    <property type="component" value="Chromosome"/>
</dbReference>
<dbReference type="GO" id="GO:0005737">
    <property type="term" value="C:cytoplasm"/>
    <property type="evidence" value="ECO:0007669"/>
    <property type="project" value="UniProtKB-SubCell"/>
</dbReference>
<dbReference type="GO" id="GO:0004814">
    <property type="term" value="F:arginine-tRNA ligase activity"/>
    <property type="evidence" value="ECO:0007669"/>
    <property type="project" value="UniProtKB-UniRule"/>
</dbReference>
<dbReference type="GO" id="GO:0005524">
    <property type="term" value="F:ATP binding"/>
    <property type="evidence" value="ECO:0007669"/>
    <property type="project" value="UniProtKB-UniRule"/>
</dbReference>
<dbReference type="GO" id="GO:0006420">
    <property type="term" value="P:arginyl-tRNA aminoacylation"/>
    <property type="evidence" value="ECO:0007669"/>
    <property type="project" value="UniProtKB-UniRule"/>
</dbReference>
<dbReference type="CDD" id="cd00671">
    <property type="entry name" value="ArgRS_core"/>
    <property type="match status" value="1"/>
</dbReference>
<dbReference type="FunFam" id="3.40.50.620:FF:000062">
    <property type="entry name" value="Arginine--tRNA ligase"/>
    <property type="match status" value="1"/>
</dbReference>
<dbReference type="Gene3D" id="3.30.1360.70">
    <property type="entry name" value="Arginyl tRNA synthetase N-terminal domain"/>
    <property type="match status" value="1"/>
</dbReference>
<dbReference type="Gene3D" id="3.40.50.620">
    <property type="entry name" value="HUPs"/>
    <property type="match status" value="1"/>
</dbReference>
<dbReference type="Gene3D" id="1.10.730.10">
    <property type="entry name" value="Isoleucyl-tRNA Synthetase, Domain 1"/>
    <property type="match status" value="1"/>
</dbReference>
<dbReference type="HAMAP" id="MF_00123">
    <property type="entry name" value="Arg_tRNA_synth"/>
    <property type="match status" value="1"/>
</dbReference>
<dbReference type="InterPro" id="IPR001278">
    <property type="entry name" value="Arg-tRNA-ligase"/>
</dbReference>
<dbReference type="InterPro" id="IPR005148">
    <property type="entry name" value="Arg-tRNA-synth_N"/>
</dbReference>
<dbReference type="InterPro" id="IPR036695">
    <property type="entry name" value="Arg-tRNA-synth_N_sf"/>
</dbReference>
<dbReference type="InterPro" id="IPR035684">
    <property type="entry name" value="ArgRS_core"/>
</dbReference>
<dbReference type="InterPro" id="IPR008909">
    <property type="entry name" value="DALR_anticod-bd"/>
</dbReference>
<dbReference type="InterPro" id="IPR014729">
    <property type="entry name" value="Rossmann-like_a/b/a_fold"/>
</dbReference>
<dbReference type="InterPro" id="IPR009080">
    <property type="entry name" value="tRNAsynth_Ia_anticodon-bd"/>
</dbReference>
<dbReference type="NCBIfam" id="TIGR00456">
    <property type="entry name" value="argS"/>
    <property type="match status" value="1"/>
</dbReference>
<dbReference type="PANTHER" id="PTHR11956:SF5">
    <property type="entry name" value="ARGININE--TRNA LIGASE, CYTOPLASMIC"/>
    <property type="match status" value="1"/>
</dbReference>
<dbReference type="PANTHER" id="PTHR11956">
    <property type="entry name" value="ARGINYL-TRNA SYNTHETASE"/>
    <property type="match status" value="1"/>
</dbReference>
<dbReference type="Pfam" id="PF03485">
    <property type="entry name" value="Arg_tRNA_synt_N"/>
    <property type="match status" value="1"/>
</dbReference>
<dbReference type="Pfam" id="PF05746">
    <property type="entry name" value="DALR_1"/>
    <property type="match status" value="1"/>
</dbReference>
<dbReference type="Pfam" id="PF00750">
    <property type="entry name" value="tRNA-synt_1d"/>
    <property type="match status" value="1"/>
</dbReference>
<dbReference type="PRINTS" id="PR01038">
    <property type="entry name" value="TRNASYNTHARG"/>
</dbReference>
<dbReference type="SMART" id="SM01016">
    <property type="entry name" value="Arg_tRNA_synt_N"/>
    <property type="match status" value="1"/>
</dbReference>
<dbReference type="SMART" id="SM00836">
    <property type="entry name" value="DALR_1"/>
    <property type="match status" value="1"/>
</dbReference>
<dbReference type="SUPFAM" id="SSF47323">
    <property type="entry name" value="Anticodon-binding domain of a subclass of class I aminoacyl-tRNA synthetases"/>
    <property type="match status" value="1"/>
</dbReference>
<dbReference type="SUPFAM" id="SSF55190">
    <property type="entry name" value="Arginyl-tRNA synthetase (ArgRS), N-terminal 'additional' domain"/>
    <property type="match status" value="1"/>
</dbReference>
<dbReference type="SUPFAM" id="SSF52374">
    <property type="entry name" value="Nucleotidylyl transferase"/>
    <property type="match status" value="1"/>
</dbReference>
<name>SYR_UREP2</name>
<protein>
    <recommendedName>
        <fullName evidence="1">Arginine--tRNA ligase</fullName>
        <ecNumber evidence="1">6.1.1.19</ecNumber>
    </recommendedName>
    <alternativeName>
        <fullName evidence="1">Arginyl-tRNA synthetase</fullName>
        <shortName evidence="1">ArgRS</shortName>
    </alternativeName>
</protein>
<accession>B1AIR8</accession>